<dbReference type="EC" id="2.1.1.-" evidence="1"/>
<dbReference type="EMBL" id="AABR07009034">
    <property type="status" value="NOT_ANNOTATED_CDS"/>
    <property type="molecule type" value="Genomic_DNA"/>
</dbReference>
<dbReference type="EMBL" id="CH473992">
    <property type="protein sequence ID" value="EDL82650.1"/>
    <property type="molecule type" value="Genomic_DNA"/>
</dbReference>
<dbReference type="RefSeq" id="NP_001102648.1">
    <property type="nucleotide sequence ID" value="NM_001109178.1"/>
</dbReference>
<dbReference type="SMR" id="D3ZLY0"/>
<dbReference type="FunCoup" id="D3ZLY0">
    <property type="interactions" value="2203"/>
</dbReference>
<dbReference type="STRING" id="10116.ENSRNOP00000041476"/>
<dbReference type="PhosphoSitePlus" id="D3ZLY0"/>
<dbReference type="PaxDb" id="10116-ENSRNOP00000041476"/>
<dbReference type="Ensembl" id="ENSRNOT00000046325.4">
    <property type="protein sequence ID" value="ENSRNOP00000041476.3"/>
    <property type="gene ID" value="ENSRNOG00000022347.5"/>
</dbReference>
<dbReference type="GeneID" id="499561"/>
<dbReference type="KEGG" id="rno:499561"/>
<dbReference type="UCSC" id="RGD:1560629">
    <property type="organism name" value="rat"/>
</dbReference>
<dbReference type="AGR" id="RGD:1560629"/>
<dbReference type="CTD" id="134145"/>
<dbReference type="RGD" id="1560629">
    <property type="gene designation" value="Atpsckmt"/>
</dbReference>
<dbReference type="eggNOG" id="KOG4058">
    <property type="taxonomic scope" value="Eukaryota"/>
</dbReference>
<dbReference type="GeneTree" id="ENSGT00390000014771"/>
<dbReference type="HOGENOM" id="CLU_068443_4_0_1"/>
<dbReference type="InParanoid" id="D3ZLY0"/>
<dbReference type="OMA" id="NPWLVAY"/>
<dbReference type="OrthoDB" id="66144at2759"/>
<dbReference type="PhylomeDB" id="D3ZLY0"/>
<dbReference type="TreeFam" id="TF314984"/>
<dbReference type="PRO" id="PR:D3ZLY0"/>
<dbReference type="Proteomes" id="UP000002494">
    <property type="component" value="Chromosome 2"/>
</dbReference>
<dbReference type="Proteomes" id="UP000234681">
    <property type="component" value="Chromosome 2"/>
</dbReference>
<dbReference type="Bgee" id="ENSRNOG00000022347">
    <property type="expression patterns" value="Expressed in quadriceps femoris and 20 other cell types or tissues"/>
</dbReference>
<dbReference type="GO" id="GO:0030061">
    <property type="term" value="C:mitochondrial crista"/>
    <property type="evidence" value="ECO:0000266"/>
    <property type="project" value="RGD"/>
</dbReference>
<dbReference type="GO" id="GO:0005739">
    <property type="term" value="C:mitochondrion"/>
    <property type="evidence" value="ECO:0000250"/>
    <property type="project" value="UniProtKB"/>
</dbReference>
<dbReference type="GO" id="GO:0016279">
    <property type="term" value="F:protein-lysine N-methyltransferase activity"/>
    <property type="evidence" value="ECO:0000250"/>
    <property type="project" value="UniProtKB"/>
</dbReference>
<dbReference type="GO" id="GO:0018023">
    <property type="term" value="P:peptidyl-lysine trimethylation"/>
    <property type="evidence" value="ECO:0000250"/>
    <property type="project" value="UniProtKB"/>
</dbReference>
<dbReference type="GO" id="GO:1905273">
    <property type="term" value="P:positive regulation of proton-transporting ATP synthase activity, rotational mechanism"/>
    <property type="evidence" value="ECO:0000250"/>
    <property type="project" value="UniProtKB"/>
</dbReference>
<dbReference type="GO" id="GO:1904058">
    <property type="term" value="P:positive regulation of sensory perception of pain"/>
    <property type="evidence" value="ECO:0000266"/>
    <property type="project" value="RGD"/>
</dbReference>
<dbReference type="GO" id="GO:1905706">
    <property type="term" value="P:regulation of mitochondrial ATP synthesis coupled proton transport"/>
    <property type="evidence" value="ECO:0000250"/>
    <property type="project" value="UniProtKB"/>
</dbReference>
<dbReference type="CDD" id="cd02440">
    <property type="entry name" value="AdoMet_MTases"/>
    <property type="match status" value="1"/>
</dbReference>
<dbReference type="FunFam" id="3.40.50.150:FF:000141">
    <property type="entry name" value="ATP synthase c subunit lysine N-methyltransferase"/>
    <property type="match status" value="1"/>
</dbReference>
<dbReference type="Gene3D" id="3.40.50.150">
    <property type="entry name" value="Vaccinia Virus protein VP39"/>
    <property type="match status" value="1"/>
</dbReference>
<dbReference type="InterPro" id="IPR026170">
    <property type="entry name" value="FAM173A/B"/>
</dbReference>
<dbReference type="InterPro" id="IPR029063">
    <property type="entry name" value="SAM-dependent_MTases_sf"/>
</dbReference>
<dbReference type="PANTHER" id="PTHR13610:SF8">
    <property type="entry name" value="ATP SYNTHASE SUBUNIT C LYSINE N-METHYLTRANSFERASE"/>
    <property type="match status" value="1"/>
</dbReference>
<dbReference type="PANTHER" id="PTHR13610">
    <property type="entry name" value="METHYLTRANSFERASE DOMAIN-CONTAINING PROTEIN"/>
    <property type="match status" value="1"/>
</dbReference>
<dbReference type="SUPFAM" id="SSF53335">
    <property type="entry name" value="S-adenosyl-L-methionine-dependent methyltransferases"/>
    <property type="match status" value="1"/>
</dbReference>
<organism>
    <name type="scientific">Rattus norvegicus</name>
    <name type="common">Rat</name>
    <dbReference type="NCBI Taxonomy" id="10116"/>
    <lineage>
        <taxon>Eukaryota</taxon>
        <taxon>Metazoa</taxon>
        <taxon>Chordata</taxon>
        <taxon>Craniata</taxon>
        <taxon>Vertebrata</taxon>
        <taxon>Euteleostomi</taxon>
        <taxon>Mammalia</taxon>
        <taxon>Eutheria</taxon>
        <taxon>Euarchontoglires</taxon>
        <taxon>Glires</taxon>
        <taxon>Rodentia</taxon>
        <taxon>Myomorpha</taxon>
        <taxon>Muroidea</taxon>
        <taxon>Muridae</taxon>
        <taxon>Murinae</taxon>
        <taxon>Rattus</taxon>
    </lineage>
</organism>
<evidence type="ECO:0000250" key="1">
    <source>
        <dbReference type="UniProtKB" id="Q6P4H8"/>
    </source>
</evidence>
<evidence type="ECO:0000250" key="2">
    <source>
        <dbReference type="UniProtKB" id="Q9D1Z3"/>
    </source>
</evidence>
<evidence type="ECO:0000255" key="3"/>
<evidence type="ECO:0000256" key="4">
    <source>
        <dbReference type="SAM" id="MobiDB-lite"/>
    </source>
</evidence>
<evidence type="ECO:0000305" key="5"/>
<evidence type="ECO:0000305" key="6">
    <source>
    </source>
</evidence>
<evidence type="ECO:0000312" key="7">
    <source>
        <dbReference type="RGD" id="1560629"/>
    </source>
</evidence>
<sequence length="216" mass="24053">MERGETPEEERQSGCVLPTSPESDSLKTSNWGFLITGVIGGALVTVYAVTTPFIAPALRKVCLPFVPATSRQVENVVKMLQHRRGPLVDIGSGDGRIVIAAAKAGFPAVGYELNPWLVWYSRYRAWREGVHGSAKFYISDLWKVTFAQYSNVVIFGVPQMMPQLEKKLEFELEDGARVIACRFPFPHWTPDHTTGEGIDTVWAYDMSACRTQGKRA</sequence>
<feature type="chain" id="PRO_0000446889" description="ATP synthase subunit C lysine N-methyltransferase">
    <location>
        <begin position="1"/>
        <end position="216"/>
    </location>
</feature>
<feature type="transmembrane region" description="Helical" evidence="3">
    <location>
        <begin position="31"/>
        <end position="50"/>
    </location>
</feature>
<feature type="region of interest" description="Disordered" evidence="4">
    <location>
        <begin position="1"/>
        <end position="25"/>
    </location>
</feature>
<feature type="region of interest" description="Required for mitochondrial location" evidence="1">
    <location>
        <begin position="51"/>
        <end position="85"/>
    </location>
</feature>
<feature type="compositionally biased region" description="Basic and acidic residues" evidence="4">
    <location>
        <begin position="1"/>
        <end position="12"/>
    </location>
</feature>
<feature type="modified residue" description="N-acetylmethionine" evidence="1">
    <location>
        <position position="1"/>
    </location>
</feature>
<comment type="function">
    <text evidence="1 2 6">Mitochondrial protein-lysine N-methyltransferase that trimethylates ATP synthase subunit C, ATP5MC1 and ATP5MC2. Trimethylation is required for proper incorporation of the C subunit into the ATP synthase complex and mitochondrial respiration (Probable). Promotes chronic pain. Involved in persistent inflammatory and neuropathic pain: methyltransferase activity in the mitochondria of sensory neurons promotes chronic pain via a pathway that depends on the production of reactive oxygen species (ROS) and on the engagement of spinal cord microglia (By similarity).</text>
</comment>
<comment type="catalytic activity">
    <reaction evidence="1">
        <text>L-lysyl-[protein] + 3 S-adenosyl-L-methionine = N(6),N(6),N(6)-trimethyl-L-lysyl-[protein] + 3 S-adenosyl-L-homocysteine + 3 H(+)</text>
        <dbReference type="Rhea" id="RHEA:54192"/>
        <dbReference type="Rhea" id="RHEA-COMP:9752"/>
        <dbReference type="Rhea" id="RHEA-COMP:13826"/>
        <dbReference type="ChEBI" id="CHEBI:15378"/>
        <dbReference type="ChEBI" id="CHEBI:29969"/>
        <dbReference type="ChEBI" id="CHEBI:57856"/>
        <dbReference type="ChEBI" id="CHEBI:59789"/>
        <dbReference type="ChEBI" id="CHEBI:61961"/>
    </reaction>
</comment>
<comment type="subcellular location">
    <subcellularLocation>
        <location evidence="1">Mitochondrion membrane</location>
        <topology evidence="3">Single-pass membrane protein</topology>
    </subcellularLocation>
    <text evidence="1">Localizes to mitochondrial cristae.</text>
</comment>
<comment type="domain">
    <text evidence="1">Contains an atypical, non-cleavable mitochondrial targeting sequence responsible for its localization to mitochondria.</text>
</comment>
<comment type="similarity">
    <text evidence="5">Belongs to the ANT/ATPSC lysine N-methyltransferase family.</text>
</comment>
<accession>D3ZLY0</accession>
<protein>
    <recommendedName>
        <fullName evidence="5">ATP synthase subunit C lysine N-methyltransferase</fullName>
        <ecNumber evidence="1">2.1.1.-</ecNumber>
    </recommendedName>
    <alternativeName>
        <fullName>Protein N-lysine methyltransferase FAM173B</fullName>
    </alternativeName>
</protein>
<name>ACKMT_RAT</name>
<keyword id="KW-0007">Acetylation</keyword>
<keyword id="KW-0472">Membrane</keyword>
<keyword id="KW-0489">Methyltransferase</keyword>
<keyword id="KW-0496">Mitochondrion</keyword>
<keyword id="KW-1185">Reference proteome</keyword>
<keyword id="KW-0949">S-adenosyl-L-methionine</keyword>
<keyword id="KW-0808">Transferase</keyword>
<keyword id="KW-0812">Transmembrane</keyword>
<keyword id="KW-1133">Transmembrane helix</keyword>
<proteinExistence type="inferred from homology"/>
<gene>
    <name type="primary">Atpsckmt</name>
    <name evidence="7" type="synonym">Fam173b</name>
</gene>
<reference key="1">
    <citation type="journal article" date="2004" name="Nature">
        <title>Genome sequence of the Brown Norway rat yields insights into mammalian evolution.</title>
        <authorList>
            <person name="Gibbs R.A."/>
            <person name="Weinstock G.M."/>
            <person name="Metzker M.L."/>
            <person name="Muzny D.M."/>
            <person name="Sodergren E.J."/>
            <person name="Scherer S."/>
            <person name="Scott G."/>
            <person name="Steffen D."/>
            <person name="Worley K.C."/>
            <person name="Burch P.E."/>
            <person name="Okwuonu G."/>
            <person name="Hines S."/>
            <person name="Lewis L."/>
            <person name="Deramo C."/>
            <person name="Delgado O."/>
            <person name="Dugan-Rocha S."/>
            <person name="Miner G."/>
            <person name="Morgan M."/>
            <person name="Hawes A."/>
            <person name="Gill R."/>
            <person name="Holt R.A."/>
            <person name="Adams M.D."/>
            <person name="Amanatides P.G."/>
            <person name="Baden-Tillson H."/>
            <person name="Barnstead M."/>
            <person name="Chin S."/>
            <person name="Evans C.A."/>
            <person name="Ferriera S."/>
            <person name="Fosler C."/>
            <person name="Glodek A."/>
            <person name="Gu Z."/>
            <person name="Jennings D."/>
            <person name="Kraft C.L."/>
            <person name="Nguyen T."/>
            <person name="Pfannkoch C.M."/>
            <person name="Sitter C."/>
            <person name="Sutton G.G."/>
            <person name="Venter J.C."/>
            <person name="Woodage T."/>
            <person name="Smith D."/>
            <person name="Lee H.-M."/>
            <person name="Gustafson E."/>
            <person name="Cahill P."/>
            <person name="Kana A."/>
            <person name="Doucette-Stamm L."/>
            <person name="Weinstock K."/>
            <person name="Fechtel K."/>
            <person name="Weiss R.B."/>
            <person name="Dunn D.M."/>
            <person name="Green E.D."/>
            <person name="Blakesley R.W."/>
            <person name="Bouffard G.G."/>
            <person name="De Jong P.J."/>
            <person name="Osoegawa K."/>
            <person name="Zhu B."/>
            <person name="Marra M."/>
            <person name="Schein J."/>
            <person name="Bosdet I."/>
            <person name="Fjell C."/>
            <person name="Jones S."/>
            <person name="Krzywinski M."/>
            <person name="Mathewson C."/>
            <person name="Siddiqui A."/>
            <person name="Wye N."/>
            <person name="McPherson J."/>
            <person name="Zhao S."/>
            <person name="Fraser C.M."/>
            <person name="Shetty J."/>
            <person name="Shatsman S."/>
            <person name="Geer K."/>
            <person name="Chen Y."/>
            <person name="Abramzon S."/>
            <person name="Nierman W.C."/>
            <person name="Havlak P.H."/>
            <person name="Chen R."/>
            <person name="Durbin K.J."/>
            <person name="Egan A."/>
            <person name="Ren Y."/>
            <person name="Song X.-Z."/>
            <person name="Li B."/>
            <person name="Liu Y."/>
            <person name="Qin X."/>
            <person name="Cawley S."/>
            <person name="Cooney A.J."/>
            <person name="D'Souza L.M."/>
            <person name="Martin K."/>
            <person name="Wu J.Q."/>
            <person name="Gonzalez-Garay M.L."/>
            <person name="Jackson A.R."/>
            <person name="Kalafus K.J."/>
            <person name="McLeod M.P."/>
            <person name="Milosavljevic A."/>
            <person name="Virk D."/>
            <person name="Volkov A."/>
            <person name="Wheeler D.A."/>
            <person name="Zhang Z."/>
            <person name="Bailey J.A."/>
            <person name="Eichler E.E."/>
            <person name="Tuzun E."/>
            <person name="Birney E."/>
            <person name="Mongin E."/>
            <person name="Ureta-Vidal A."/>
            <person name="Woodwark C."/>
            <person name="Zdobnov E."/>
            <person name="Bork P."/>
            <person name="Suyama M."/>
            <person name="Torrents D."/>
            <person name="Alexandersson M."/>
            <person name="Trask B.J."/>
            <person name="Young J.M."/>
            <person name="Huang H."/>
            <person name="Wang H."/>
            <person name="Xing H."/>
            <person name="Daniels S."/>
            <person name="Gietzen D."/>
            <person name="Schmidt J."/>
            <person name="Stevens K."/>
            <person name="Vitt U."/>
            <person name="Wingrove J."/>
            <person name="Camara F."/>
            <person name="Mar Alba M."/>
            <person name="Abril J.F."/>
            <person name="Guigo R."/>
            <person name="Smit A."/>
            <person name="Dubchak I."/>
            <person name="Rubin E.M."/>
            <person name="Couronne O."/>
            <person name="Poliakov A."/>
            <person name="Huebner N."/>
            <person name="Ganten D."/>
            <person name="Goesele C."/>
            <person name="Hummel O."/>
            <person name="Kreitler T."/>
            <person name="Lee Y.-A."/>
            <person name="Monti J."/>
            <person name="Schulz H."/>
            <person name="Zimdahl H."/>
            <person name="Himmelbauer H."/>
            <person name="Lehrach H."/>
            <person name="Jacob H.J."/>
            <person name="Bromberg S."/>
            <person name="Gullings-Handley J."/>
            <person name="Jensen-Seaman M.I."/>
            <person name="Kwitek A.E."/>
            <person name="Lazar J."/>
            <person name="Pasko D."/>
            <person name="Tonellato P.J."/>
            <person name="Twigger S."/>
            <person name="Ponting C.P."/>
            <person name="Duarte J.M."/>
            <person name="Rice S."/>
            <person name="Goodstadt L."/>
            <person name="Beatson S.A."/>
            <person name="Emes R.D."/>
            <person name="Winter E.E."/>
            <person name="Webber C."/>
            <person name="Brandt P."/>
            <person name="Nyakatura G."/>
            <person name="Adetobi M."/>
            <person name="Chiaromonte F."/>
            <person name="Elnitski L."/>
            <person name="Eswara P."/>
            <person name="Hardison R.C."/>
            <person name="Hou M."/>
            <person name="Kolbe D."/>
            <person name="Makova K."/>
            <person name="Miller W."/>
            <person name="Nekrutenko A."/>
            <person name="Riemer C."/>
            <person name="Schwartz S."/>
            <person name="Taylor J."/>
            <person name="Yang S."/>
            <person name="Zhang Y."/>
            <person name="Lindpaintner K."/>
            <person name="Andrews T.D."/>
            <person name="Caccamo M."/>
            <person name="Clamp M."/>
            <person name="Clarke L."/>
            <person name="Curwen V."/>
            <person name="Durbin R.M."/>
            <person name="Eyras E."/>
            <person name="Searle S.M."/>
            <person name="Cooper G.M."/>
            <person name="Batzoglou S."/>
            <person name="Brudno M."/>
            <person name="Sidow A."/>
            <person name="Stone E.A."/>
            <person name="Payseur B.A."/>
            <person name="Bourque G."/>
            <person name="Lopez-Otin C."/>
            <person name="Puente X.S."/>
            <person name="Chakrabarti K."/>
            <person name="Chatterji S."/>
            <person name="Dewey C."/>
            <person name="Pachter L."/>
            <person name="Bray N."/>
            <person name="Yap V.B."/>
            <person name="Caspi A."/>
            <person name="Tesler G."/>
            <person name="Pevzner P.A."/>
            <person name="Haussler D."/>
            <person name="Roskin K.M."/>
            <person name="Baertsch R."/>
            <person name="Clawson H."/>
            <person name="Furey T.S."/>
            <person name="Hinrichs A.S."/>
            <person name="Karolchik D."/>
            <person name="Kent W.J."/>
            <person name="Rosenbloom K.R."/>
            <person name="Trumbower H."/>
            <person name="Weirauch M."/>
            <person name="Cooper D.N."/>
            <person name="Stenson P.D."/>
            <person name="Ma B."/>
            <person name="Brent M."/>
            <person name="Arumugam M."/>
            <person name="Shteynberg D."/>
            <person name="Copley R.R."/>
            <person name="Taylor M.S."/>
            <person name="Riethman H."/>
            <person name="Mudunuri U."/>
            <person name="Peterson J."/>
            <person name="Guyer M."/>
            <person name="Felsenfeld A."/>
            <person name="Old S."/>
            <person name="Mockrin S."/>
            <person name="Collins F.S."/>
        </authorList>
    </citation>
    <scope>NUCLEOTIDE SEQUENCE [LARGE SCALE GENOMIC DNA]</scope>
    <source>
        <strain>Brown Norway</strain>
    </source>
</reference>
<reference key="2">
    <citation type="submission" date="2005-07" db="EMBL/GenBank/DDBJ databases">
        <authorList>
            <person name="Mural R.J."/>
            <person name="Li P.W."/>
            <person name="Adams M.D."/>
            <person name="Amanatides P.G."/>
            <person name="Baden-Tillson H."/>
            <person name="Barnstead M."/>
            <person name="Chin S.H."/>
            <person name="Dew I."/>
            <person name="Evans C.A."/>
            <person name="Ferriera S."/>
            <person name="Flanigan M."/>
            <person name="Fosler C."/>
            <person name="Glodek A."/>
            <person name="Gu Z."/>
            <person name="Holt R.A."/>
            <person name="Jennings D."/>
            <person name="Kraft C.L."/>
            <person name="Lu F."/>
            <person name="Nguyen T."/>
            <person name="Nusskern D.R."/>
            <person name="Pfannkoch C.M."/>
            <person name="Sitter C."/>
            <person name="Sutton G.G."/>
            <person name="Venter J.C."/>
            <person name="Wang Z."/>
            <person name="Woodage T."/>
            <person name="Zheng X.H."/>
            <person name="Zhong F."/>
        </authorList>
    </citation>
    <scope>NUCLEOTIDE SEQUENCE [LARGE SCALE GENOMIC DNA]</scope>
    <source>
        <strain>Brown Norway</strain>
    </source>
</reference>
<reference key="3">
    <citation type="journal article" date="2019" name="J. Biol. Chem.">
        <title>Lysine methylation by the mitochondrial methyltransferase FAM173B optimizes the function of mitochondrial ATP synthase.</title>
        <authorList>
            <person name="Malecki J.M."/>
            <person name="Willemen H.L.D.M."/>
            <person name="Pinto R."/>
            <person name="Ho A.Y.Y."/>
            <person name="Moen A."/>
            <person name="Kjoenstad I.F."/>
            <person name="Burgering B.M.T."/>
            <person name="Zwartkruis F."/>
            <person name="Eijkelkamp N."/>
            <person name="Falnes P.O."/>
        </authorList>
    </citation>
    <scope>FUNCTION</scope>
</reference>